<name>MIAA_ROSS1</name>
<protein>
    <recommendedName>
        <fullName evidence="1">tRNA dimethylallyltransferase</fullName>
        <ecNumber evidence="1">2.5.1.75</ecNumber>
    </recommendedName>
    <alternativeName>
        <fullName evidence="1">Dimethylallyl diphosphate:tRNA dimethylallyltransferase</fullName>
        <shortName evidence="1">DMAPP:tRNA dimethylallyltransferase</shortName>
        <shortName evidence="1">DMATase</shortName>
    </alternativeName>
    <alternativeName>
        <fullName evidence="1">Isopentenyl-diphosphate:tRNA isopentenyltransferase</fullName>
        <shortName evidence="1">IPP transferase</shortName>
        <shortName evidence="1">IPPT</shortName>
        <shortName evidence="1">IPTase</shortName>
    </alternativeName>
</protein>
<feature type="chain" id="PRO_1000020653" description="tRNA dimethylallyltransferase">
    <location>
        <begin position="1"/>
        <end position="305"/>
    </location>
</feature>
<feature type="region of interest" description="Interaction with substrate tRNA" evidence="1">
    <location>
        <begin position="34"/>
        <end position="37"/>
    </location>
</feature>
<feature type="binding site" evidence="1">
    <location>
        <begin position="9"/>
        <end position="16"/>
    </location>
    <ligand>
        <name>ATP</name>
        <dbReference type="ChEBI" id="CHEBI:30616"/>
    </ligand>
</feature>
<feature type="binding site" evidence="1">
    <location>
        <begin position="11"/>
        <end position="16"/>
    </location>
    <ligand>
        <name>substrate</name>
    </ligand>
</feature>
<feature type="site" description="Interaction with substrate tRNA" evidence="1">
    <location>
        <position position="100"/>
    </location>
</feature>
<feature type="site" description="Interaction with substrate tRNA" evidence="1">
    <location>
        <position position="123"/>
    </location>
</feature>
<evidence type="ECO:0000255" key="1">
    <source>
        <dbReference type="HAMAP-Rule" id="MF_00185"/>
    </source>
</evidence>
<comment type="function">
    <text evidence="1">Catalyzes the transfer of a dimethylallyl group onto the adenine at position 37 in tRNAs that read codons beginning with uridine, leading to the formation of N6-(dimethylallyl)adenosine (i(6)A).</text>
</comment>
<comment type="catalytic activity">
    <reaction evidence="1">
        <text>adenosine(37) in tRNA + dimethylallyl diphosphate = N(6)-dimethylallyladenosine(37) in tRNA + diphosphate</text>
        <dbReference type="Rhea" id="RHEA:26482"/>
        <dbReference type="Rhea" id="RHEA-COMP:10162"/>
        <dbReference type="Rhea" id="RHEA-COMP:10375"/>
        <dbReference type="ChEBI" id="CHEBI:33019"/>
        <dbReference type="ChEBI" id="CHEBI:57623"/>
        <dbReference type="ChEBI" id="CHEBI:74411"/>
        <dbReference type="ChEBI" id="CHEBI:74415"/>
        <dbReference type="EC" id="2.5.1.75"/>
    </reaction>
</comment>
<comment type="cofactor">
    <cofactor evidence="1">
        <name>Mg(2+)</name>
        <dbReference type="ChEBI" id="CHEBI:18420"/>
    </cofactor>
</comment>
<comment type="subunit">
    <text evidence="1">Monomer.</text>
</comment>
<comment type="similarity">
    <text evidence="1">Belongs to the IPP transferase family.</text>
</comment>
<keyword id="KW-0067">ATP-binding</keyword>
<keyword id="KW-0460">Magnesium</keyword>
<keyword id="KW-0547">Nucleotide-binding</keyword>
<keyword id="KW-0808">Transferase</keyword>
<keyword id="KW-0819">tRNA processing</keyword>
<organism>
    <name type="scientific">Roseiflexus sp. (strain RS-1)</name>
    <dbReference type="NCBI Taxonomy" id="357808"/>
    <lineage>
        <taxon>Bacteria</taxon>
        <taxon>Bacillati</taxon>
        <taxon>Chloroflexota</taxon>
        <taxon>Chloroflexia</taxon>
        <taxon>Chloroflexales</taxon>
        <taxon>Roseiflexineae</taxon>
        <taxon>Roseiflexaceae</taxon>
        <taxon>Roseiflexus</taxon>
    </lineage>
</organism>
<accession>A5UYJ2</accession>
<sequence>MIPLIAIVGPTAVGKTALSIRLAQQFNGEIVSVDSRQVYRGMDIGTAKPTPAERAAVPHHLIDIVDPDEAFSLAVYQDLATAAIADIAARGRLPFLVGGTGQYLAAVLQGWQLPRVAPRPDIRAALERQAAELGAAALYARLAEIDPAAAASIPPNNIRRIIRALEVYEATGKPISEQRSVQPPPYHTVTIWLTLPTPALYARIDARVEAMIAAGLLDEVHRLLERGYHWDLPSMSGLGYREFRPYFEGRITLDEAIARLKYDTHAFARRQPAWFRRLPNVLTLPADASDLQQQAATIVRQWIDA</sequence>
<proteinExistence type="inferred from homology"/>
<reference key="1">
    <citation type="submission" date="2007-04" db="EMBL/GenBank/DDBJ databases">
        <title>Complete sequence of Roseiflexus sp. RS-1.</title>
        <authorList>
            <consortium name="US DOE Joint Genome Institute"/>
            <person name="Copeland A."/>
            <person name="Lucas S."/>
            <person name="Lapidus A."/>
            <person name="Barry K."/>
            <person name="Detter J.C."/>
            <person name="Glavina del Rio T."/>
            <person name="Hammon N."/>
            <person name="Israni S."/>
            <person name="Dalin E."/>
            <person name="Tice H."/>
            <person name="Pitluck S."/>
            <person name="Chertkov O."/>
            <person name="Brettin T."/>
            <person name="Bruce D."/>
            <person name="Han C."/>
            <person name="Schmutz J."/>
            <person name="Larimer F."/>
            <person name="Land M."/>
            <person name="Hauser L."/>
            <person name="Kyrpides N."/>
            <person name="Mikhailova N."/>
            <person name="Bryant D.A."/>
            <person name="Richardson P."/>
        </authorList>
    </citation>
    <scope>NUCLEOTIDE SEQUENCE [LARGE SCALE GENOMIC DNA]</scope>
    <source>
        <strain>RS-1</strain>
    </source>
</reference>
<gene>
    <name evidence="1" type="primary">miaA</name>
    <name type="ordered locus">RoseRS_3334</name>
</gene>
<dbReference type="EC" id="2.5.1.75" evidence="1"/>
<dbReference type="EMBL" id="CP000686">
    <property type="protein sequence ID" value="ABQ91695.1"/>
    <property type="molecule type" value="Genomic_DNA"/>
</dbReference>
<dbReference type="RefSeq" id="WP_011958038.1">
    <property type="nucleotide sequence ID" value="NC_009523.1"/>
</dbReference>
<dbReference type="SMR" id="A5UYJ2"/>
<dbReference type="STRING" id="357808.RoseRS_3334"/>
<dbReference type="KEGG" id="rrs:RoseRS_3334"/>
<dbReference type="eggNOG" id="COG0324">
    <property type="taxonomic scope" value="Bacteria"/>
</dbReference>
<dbReference type="HOGENOM" id="CLU_032616_0_1_0"/>
<dbReference type="OrthoDB" id="9776390at2"/>
<dbReference type="Proteomes" id="UP000006554">
    <property type="component" value="Chromosome"/>
</dbReference>
<dbReference type="GO" id="GO:0005524">
    <property type="term" value="F:ATP binding"/>
    <property type="evidence" value="ECO:0007669"/>
    <property type="project" value="UniProtKB-UniRule"/>
</dbReference>
<dbReference type="GO" id="GO:0052381">
    <property type="term" value="F:tRNA dimethylallyltransferase activity"/>
    <property type="evidence" value="ECO:0007669"/>
    <property type="project" value="UniProtKB-UniRule"/>
</dbReference>
<dbReference type="GO" id="GO:0006400">
    <property type="term" value="P:tRNA modification"/>
    <property type="evidence" value="ECO:0007669"/>
    <property type="project" value="TreeGrafter"/>
</dbReference>
<dbReference type="FunFam" id="1.10.20.140:FF:000001">
    <property type="entry name" value="tRNA dimethylallyltransferase"/>
    <property type="match status" value="1"/>
</dbReference>
<dbReference type="Gene3D" id="1.10.20.140">
    <property type="match status" value="1"/>
</dbReference>
<dbReference type="Gene3D" id="3.40.50.300">
    <property type="entry name" value="P-loop containing nucleotide triphosphate hydrolases"/>
    <property type="match status" value="1"/>
</dbReference>
<dbReference type="HAMAP" id="MF_00185">
    <property type="entry name" value="IPP_trans"/>
    <property type="match status" value="1"/>
</dbReference>
<dbReference type="InterPro" id="IPR039657">
    <property type="entry name" value="Dimethylallyltransferase"/>
</dbReference>
<dbReference type="InterPro" id="IPR018022">
    <property type="entry name" value="IPT"/>
</dbReference>
<dbReference type="InterPro" id="IPR027417">
    <property type="entry name" value="P-loop_NTPase"/>
</dbReference>
<dbReference type="NCBIfam" id="TIGR00174">
    <property type="entry name" value="miaA"/>
    <property type="match status" value="1"/>
</dbReference>
<dbReference type="PANTHER" id="PTHR11088">
    <property type="entry name" value="TRNA DIMETHYLALLYLTRANSFERASE"/>
    <property type="match status" value="1"/>
</dbReference>
<dbReference type="PANTHER" id="PTHR11088:SF60">
    <property type="entry name" value="TRNA DIMETHYLALLYLTRANSFERASE"/>
    <property type="match status" value="1"/>
</dbReference>
<dbReference type="Pfam" id="PF01715">
    <property type="entry name" value="IPPT"/>
    <property type="match status" value="1"/>
</dbReference>
<dbReference type="SUPFAM" id="SSF52540">
    <property type="entry name" value="P-loop containing nucleoside triphosphate hydrolases"/>
    <property type="match status" value="2"/>
</dbReference>